<comment type="function">
    <text evidence="1">Cell wall formation. Catalyzes the addition of glutamate to the nucleotide precursor UDP-N-acetylmuramoyl-L-alanine (UMA).</text>
</comment>
<comment type="catalytic activity">
    <reaction evidence="1">
        <text>UDP-N-acetyl-alpha-D-muramoyl-L-alanine + D-glutamate + ATP = UDP-N-acetyl-alpha-D-muramoyl-L-alanyl-D-glutamate + ADP + phosphate + H(+)</text>
        <dbReference type="Rhea" id="RHEA:16429"/>
        <dbReference type="ChEBI" id="CHEBI:15378"/>
        <dbReference type="ChEBI" id="CHEBI:29986"/>
        <dbReference type="ChEBI" id="CHEBI:30616"/>
        <dbReference type="ChEBI" id="CHEBI:43474"/>
        <dbReference type="ChEBI" id="CHEBI:83898"/>
        <dbReference type="ChEBI" id="CHEBI:83900"/>
        <dbReference type="ChEBI" id="CHEBI:456216"/>
        <dbReference type="EC" id="6.3.2.9"/>
    </reaction>
</comment>
<comment type="pathway">
    <text evidence="1">Cell wall biogenesis; peptidoglycan biosynthesis.</text>
</comment>
<comment type="subcellular location">
    <subcellularLocation>
        <location evidence="1">Cytoplasm</location>
    </subcellularLocation>
</comment>
<comment type="similarity">
    <text evidence="1">Belongs to the MurCDEF family.</text>
</comment>
<comment type="sequence caution" evidence="2">
    <conflict type="erroneous initiation">
        <sequence resource="EMBL-CDS" id="BAD56610"/>
    </conflict>
</comment>
<sequence>MLEFLRGRDVLVAGWGISGRSLVEPLRDIGAHPVVTDSGAKALAEAAELGLEVATSVELESADLSRFALVITSPGWRPDSPVLVSAVTEGIPVWGDVEFAWWVDQARIYGPVRKWLVVTGTNGKTTTTQMTHAILRAAGIASVACGNIGLPILDALRRNPGPQVLAVELSSFQLHWAPSVRPEAGVVLNVAEDHLDWHGGLDAYAAAKARALVGRIGVVGLDDPVAAALARRSKARRTVGFRVGVPADGELGVVDGKLLDRAFTKAAILAEVGDISPPGPAGVADALAAAALTRAIDVAPQFVKEGLQEHKVGPHRAAFVREVAGVEFIDDSKATNPHAARSSILAHPHVVWIAGGRLKGAAVEDLVEEVADRLVAAVLIGVDAPVIAAALARHAPEVPVVEVRAGDDAVMADDPLRPDEADAVMAAAVRTAAGYARAGDTVLLAPAAASLDMFADYTHRGRSFADAVHALEDGDIGRQP</sequence>
<dbReference type="EC" id="6.3.2.9" evidence="1"/>
<dbReference type="EMBL" id="AP006618">
    <property type="protein sequence ID" value="BAD56610.1"/>
    <property type="status" value="ALT_INIT"/>
    <property type="molecule type" value="Genomic_DNA"/>
</dbReference>
<dbReference type="RefSeq" id="WP_041560008.1">
    <property type="nucleotide sequence ID" value="NC_006361.1"/>
</dbReference>
<dbReference type="SMR" id="Q5YYY1"/>
<dbReference type="STRING" id="247156.NFA_17640"/>
<dbReference type="GeneID" id="61132545"/>
<dbReference type="KEGG" id="nfa:NFA_17640"/>
<dbReference type="eggNOG" id="COG0771">
    <property type="taxonomic scope" value="Bacteria"/>
</dbReference>
<dbReference type="HOGENOM" id="CLU_032540_0_0_11"/>
<dbReference type="OrthoDB" id="9809796at2"/>
<dbReference type="UniPathway" id="UPA00219"/>
<dbReference type="Proteomes" id="UP000006820">
    <property type="component" value="Chromosome"/>
</dbReference>
<dbReference type="GO" id="GO:0005737">
    <property type="term" value="C:cytoplasm"/>
    <property type="evidence" value="ECO:0007669"/>
    <property type="project" value="UniProtKB-SubCell"/>
</dbReference>
<dbReference type="GO" id="GO:0005524">
    <property type="term" value="F:ATP binding"/>
    <property type="evidence" value="ECO:0007669"/>
    <property type="project" value="UniProtKB-UniRule"/>
</dbReference>
<dbReference type="GO" id="GO:0008764">
    <property type="term" value="F:UDP-N-acetylmuramoylalanine-D-glutamate ligase activity"/>
    <property type="evidence" value="ECO:0007669"/>
    <property type="project" value="UniProtKB-UniRule"/>
</dbReference>
<dbReference type="GO" id="GO:0051301">
    <property type="term" value="P:cell division"/>
    <property type="evidence" value="ECO:0007669"/>
    <property type="project" value="UniProtKB-KW"/>
</dbReference>
<dbReference type="GO" id="GO:0071555">
    <property type="term" value="P:cell wall organization"/>
    <property type="evidence" value="ECO:0007669"/>
    <property type="project" value="UniProtKB-KW"/>
</dbReference>
<dbReference type="GO" id="GO:0009252">
    <property type="term" value="P:peptidoglycan biosynthetic process"/>
    <property type="evidence" value="ECO:0007669"/>
    <property type="project" value="UniProtKB-UniRule"/>
</dbReference>
<dbReference type="GO" id="GO:0008360">
    <property type="term" value="P:regulation of cell shape"/>
    <property type="evidence" value="ECO:0007669"/>
    <property type="project" value="UniProtKB-KW"/>
</dbReference>
<dbReference type="Gene3D" id="3.90.190.20">
    <property type="entry name" value="Mur ligase, C-terminal domain"/>
    <property type="match status" value="1"/>
</dbReference>
<dbReference type="Gene3D" id="3.40.1190.10">
    <property type="entry name" value="Mur-like, catalytic domain"/>
    <property type="match status" value="1"/>
</dbReference>
<dbReference type="Gene3D" id="3.40.50.720">
    <property type="entry name" value="NAD(P)-binding Rossmann-like Domain"/>
    <property type="match status" value="1"/>
</dbReference>
<dbReference type="HAMAP" id="MF_00639">
    <property type="entry name" value="MurD"/>
    <property type="match status" value="1"/>
</dbReference>
<dbReference type="InterPro" id="IPR036565">
    <property type="entry name" value="Mur-like_cat_sf"/>
</dbReference>
<dbReference type="InterPro" id="IPR004101">
    <property type="entry name" value="Mur_ligase_C"/>
</dbReference>
<dbReference type="InterPro" id="IPR036615">
    <property type="entry name" value="Mur_ligase_C_dom_sf"/>
</dbReference>
<dbReference type="InterPro" id="IPR013221">
    <property type="entry name" value="Mur_ligase_cen"/>
</dbReference>
<dbReference type="InterPro" id="IPR005762">
    <property type="entry name" value="MurD"/>
</dbReference>
<dbReference type="NCBIfam" id="TIGR01087">
    <property type="entry name" value="murD"/>
    <property type="match status" value="1"/>
</dbReference>
<dbReference type="PANTHER" id="PTHR43692">
    <property type="entry name" value="UDP-N-ACETYLMURAMOYLALANINE--D-GLUTAMATE LIGASE"/>
    <property type="match status" value="1"/>
</dbReference>
<dbReference type="PANTHER" id="PTHR43692:SF1">
    <property type="entry name" value="UDP-N-ACETYLMURAMOYLALANINE--D-GLUTAMATE LIGASE"/>
    <property type="match status" value="1"/>
</dbReference>
<dbReference type="Pfam" id="PF02875">
    <property type="entry name" value="Mur_ligase_C"/>
    <property type="match status" value="1"/>
</dbReference>
<dbReference type="Pfam" id="PF08245">
    <property type="entry name" value="Mur_ligase_M"/>
    <property type="match status" value="1"/>
</dbReference>
<dbReference type="Pfam" id="PF21799">
    <property type="entry name" value="MurD-like_N"/>
    <property type="match status" value="1"/>
</dbReference>
<dbReference type="SUPFAM" id="SSF51984">
    <property type="entry name" value="MurCD N-terminal domain"/>
    <property type="match status" value="1"/>
</dbReference>
<dbReference type="SUPFAM" id="SSF53623">
    <property type="entry name" value="MurD-like peptide ligases, catalytic domain"/>
    <property type="match status" value="1"/>
</dbReference>
<dbReference type="SUPFAM" id="SSF53244">
    <property type="entry name" value="MurD-like peptide ligases, peptide-binding domain"/>
    <property type="match status" value="1"/>
</dbReference>
<feature type="chain" id="PRO_0000109051" description="UDP-N-acetylmuramoylalanine--D-glutamate ligase">
    <location>
        <begin position="1"/>
        <end position="480"/>
    </location>
</feature>
<feature type="binding site" evidence="1">
    <location>
        <begin position="120"/>
        <end position="126"/>
    </location>
    <ligand>
        <name>ATP</name>
        <dbReference type="ChEBI" id="CHEBI:30616"/>
    </ligand>
</feature>
<accession>Q5YYY1</accession>
<keyword id="KW-0067">ATP-binding</keyword>
<keyword id="KW-0131">Cell cycle</keyword>
<keyword id="KW-0132">Cell division</keyword>
<keyword id="KW-0133">Cell shape</keyword>
<keyword id="KW-0961">Cell wall biogenesis/degradation</keyword>
<keyword id="KW-0963">Cytoplasm</keyword>
<keyword id="KW-0436">Ligase</keyword>
<keyword id="KW-0547">Nucleotide-binding</keyword>
<keyword id="KW-0573">Peptidoglycan synthesis</keyword>
<keyword id="KW-1185">Reference proteome</keyword>
<evidence type="ECO:0000255" key="1">
    <source>
        <dbReference type="HAMAP-Rule" id="MF_00639"/>
    </source>
</evidence>
<evidence type="ECO:0000305" key="2"/>
<protein>
    <recommendedName>
        <fullName evidence="1">UDP-N-acetylmuramoylalanine--D-glutamate ligase</fullName>
        <ecNumber evidence="1">6.3.2.9</ecNumber>
    </recommendedName>
    <alternativeName>
        <fullName evidence="1">D-glutamic acid-adding enzyme</fullName>
    </alternativeName>
    <alternativeName>
        <fullName evidence="1">UDP-N-acetylmuramoyl-L-alanyl-D-glutamate synthetase</fullName>
    </alternativeName>
</protein>
<name>MURD_NOCFA</name>
<organism>
    <name type="scientific">Nocardia farcinica (strain IFM 10152)</name>
    <dbReference type="NCBI Taxonomy" id="247156"/>
    <lineage>
        <taxon>Bacteria</taxon>
        <taxon>Bacillati</taxon>
        <taxon>Actinomycetota</taxon>
        <taxon>Actinomycetes</taxon>
        <taxon>Mycobacteriales</taxon>
        <taxon>Nocardiaceae</taxon>
        <taxon>Nocardia</taxon>
    </lineage>
</organism>
<gene>
    <name evidence="1" type="primary">murD</name>
    <name type="ordered locus">NFA_17640</name>
</gene>
<proteinExistence type="inferred from homology"/>
<reference key="1">
    <citation type="journal article" date="2004" name="Proc. Natl. Acad. Sci. U.S.A.">
        <title>The complete genomic sequence of Nocardia farcinica IFM 10152.</title>
        <authorList>
            <person name="Ishikawa J."/>
            <person name="Yamashita A."/>
            <person name="Mikami Y."/>
            <person name="Hoshino Y."/>
            <person name="Kurita H."/>
            <person name="Hotta K."/>
            <person name="Shiba T."/>
            <person name="Hattori M."/>
        </authorList>
    </citation>
    <scope>NUCLEOTIDE SEQUENCE [LARGE SCALE GENOMIC DNA]</scope>
    <source>
        <strain>IFM 10152</strain>
    </source>
</reference>